<organism>
    <name type="scientific">Proteus hauseri</name>
    <dbReference type="NCBI Taxonomy" id="183417"/>
    <lineage>
        <taxon>Bacteria</taxon>
        <taxon>Pseudomonadati</taxon>
        <taxon>Pseudomonadota</taxon>
        <taxon>Gammaproteobacteria</taxon>
        <taxon>Enterobacterales</taxon>
        <taxon>Morganellaceae</taxon>
        <taxon>Proteus</taxon>
    </lineage>
</organism>
<sequence>ISVDELSNYNF</sequence>
<dbReference type="EC" id="3.1.21.4"/>
<dbReference type="EMBL" id="L04163">
    <property type="protein sequence ID" value="AAA25660.1"/>
    <property type="molecule type" value="Genomic_DNA"/>
</dbReference>
<dbReference type="PIR" id="S35490">
    <property type="entry name" value="S35490"/>
</dbReference>
<dbReference type="REBASE" id="1541">
    <property type="entry name" value="PvuI"/>
</dbReference>
<dbReference type="GO" id="GO:0009036">
    <property type="term" value="F:type II site-specific deoxyribonuclease activity"/>
    <property type="evidence" value="ECO:0007669"/>
    <property type="project" value="UniProtKB-EC"/>
</dbReference>
<dbReference type="GO" id="GO:0009307">
    <property type="term" value="P:DNA restriction-modification system"/>
    <property type="evidence" value="ECO:0007669"/>
    <property type="project" value="UniProtKB-KW"/>
</dbReference>
<feature type="chain" id="PRO_0000077355" description="Type II restriction enzyme PvuI">
    <location>
        <begin position="1" status="less than"/>
        <end position="11"/>
    </location>
</feature>
<feature type="non-terminal residue">
    <location>
        <position position="1"/>
    </location>
</feature>
<name>T2P1_PROHU</name>
<reference key="1">
    <citation type="journal article" date="1992" name="Nucleic Acids Res.">
        <title>Cloning and characterization of genes for the PvuI restriction and modification system.</title>
        <authorList>
            <person name="Smith M.D."/>
            <person name="Longo M."/>
            <person name="Gerard G.F."/>
            <person name="Chatterjee D.K."/>
        </authorList>
    </citation>
    <scope>NUCLEOTIDE SEQUENCE [GENOMIC DNA]</scope>
    <scope>FUNCTION</scope>
    <source>
        <strain>ATCC 13315 / DSM 30118 / JCM 1668 / NBRC 3851 / NCIMB 4175 / NCTC 4175 / NRRL B-3405</strain>
    </source>
</reference>
<reference key="2">
    <citation type="journal article" date="2003" name="Nucleic Acids Res.">
        <title>A nomenclature for restriction enzymes, DNA methyltransferases, homing endonucleases and their genes.</title>
        <authorList>
            <person name="Roberts R.J."/>
            <person name="Belfort M."/>
            <person name="Bestor T."/>
            <person name="Bhagwat A.S."/>
            <person name="Bickle T.A."/>
            <person name="Bitinaite J."/>
            <person name="Blumenthal R.M."/>
            <person name="Degtyarev S.K."/>
            <person name="Dryden D.T."/>
            <person name="Dybvig K."/>
            <person name="Firman K."/>
            <person name="Gromova E.S."/>
            <person name="Gumport R.I."/>
            <person name="Halford S.E."/>
            <person name="Hattman S."/>
            <person name="Heitman J."/>
            <person name="Hornby D.P."/>
            <person name="Janulaitis A."/>
            <person name="Jeltsch A."/>
            <person name="Josephsen J."/>
            <person name="Kiss A."/>
            <person name="Klaenhammer T.R."/>
            <person name="Kobayashi I."/>
            <person name="Kong H."/>
            <person name="Krueger D.H."/>
            <person name="Lacks S."/>
            <person name="Marinus M.G."/>
            <person name="Miyahara M."/>
            <person name="Morgan R.D."/>
            <person name="Murray N.E."/>
            <person name="Nagaraja V."/>
            <person name="Piekarowicz A."/>
            <person name="Pingoud A."/>
            <person name="Raleigh E."/>
            <person name="Rao D.N."/>
            <person name="Reich N."/>
            <person name="Repin V.E."/>
            <person name="Selker E.U."/>
            <person name="Shaw P.C."/>
            <person name="Stein D.C."/>
            <person name="Stoddard B.L."/>
            <person name="Szybalski W."/>
            <person name="Trautner T.A."/>
            <person name="Van Etten J.L."/>
            <person name="Vitor J.M."/>
            <person name="Wilson G.G."/>
            <person name="Xu S.Y."/>
        </authorList>
    </citation>
    <scope>NOMENCLATURE</scope>
    <scope>SUBTYPE</scope>
</reference>
<gene>
    <name type="primary">pvuIR</name>
</gene>
<comment type="function">
    <text evidence="1 3">A P subtype restriction enzyme that recognizes the double-stranded sequence 5'-CGATCG-3' and cleaves after T-4.</text>
</comment>
<comment type="catalytic activity">
    <reaction>
        <text>Endonucleolytic cleavage of DNA to give specific double-stranded fragments with terminal 5'-phosphates.</text>
        <dbReference type="EC" id="3.1.21.4"/>
    </reaction>
</comment>
<keyword id="KW-0255">Endonuclease</keyword>
<keyword id="KW-0378">Hydrolase</keyword>
<keyword id="KW-0540">Nuclease</keyword>
<keyword id="KW-0680">Restriction system</keyword>
<protein>
    <recommendedName>
        <fullName evidence="1">Type II restriction enzyme PvuI</fullName>
        <shortName evidence="2">R.PvuI</shortName>
        <ecNumber>3.1.21.4</ecNumber>
    </recommendedName>
    <alternativeName>
        <fullName>Endonuclease PvuI</fullName>
    </alternativeName>
    <alternativeName>
        <fullName>Type-2 restriction enzyme PvuI</fullName>
    </alternativeName>
</protein>
<proteinExistence type="predicted"/>
<evidence type="ECO:0000303" key="1">
    <source>
    </source>
</evidence>
<evidence type="ECO:0000303" key="2">
    <source>
    </source>
</evidence>
<evidence type="ECO:0000305" key="3">
    <source>
    </source>
</evidence>
<accession>P31031</accession>